<proteinExistence type="inferred from homology"/>
<evidence type="ECO:0000255" key="1">
    <source>
        <dbReference type="HAMAP-Rule" id="MF_00333"/>
    </source>
</evidence>
<keyword id="KW-0963">Cytoplasm</keyword>
<keyword id="KW-0350">Heme biosynthesis</keyword>
<keyword id="KW-0479">Metal-binding</keyword>
<keyword id="KW-0560">Oxidoreductase</keyword>
<keyword id="KW-0627">Porphyrin biosynthesis</keyword>
<comment type="function">
    <text evidence="1">Involved in the heme biosynthesis. Catalyzes the aerobic oxidative decarboxylation of propionate groups of rings A and B of coproporphyrinogen-III to yield the vinyl groups in protoporphyrinogen-IX.</text>
</comment>
<comment type="catalytic activity">
    <reaction evidence="1">
        <text>coproporphyrinogen III + O2 + 2 H(+) = protoporphyrinogen IX + 2 CO2 + 2 H2O</text>
        <dbReference type="Rhea" id="RHEA:18257"/>
        <dbReference type="ChEBI" id="CHEBI:15377"/>
        <dbReference type="ChEBI" id="CHEBI:15378"/>
        <dbReference type="ChEBI" id="CHEBI:15379"/>
        <dbReference type="ChEBI" id="CHEBI:16526"/>
        <dbReference type="ChEBI" id="CHEBI:57307"/>
        <dbReference type="ChEBI" id="CHEBI:57309"/>
        <dbReference type="EC" id="1.3.3.3"/>
    </reaction>
</comment>
<comment type="cofactor">
    <cofactor evidence="1">
        <name>a divalent metal cation</name>
        <dbReference type="ChEBI" id="CHEBI:60240"/>
    </cofactor>
</comment>
<comment type="pathway">
    <text evidence="1">Porphyrin-containing compound metabolism; protoporphyrin-IX biosynthesis; protoporphyrinogen-IX from coproporphyrinogen-III (O2 route): step 1/1.</text>
</comment>
<comment type="subunit">
    <text evidence="1">Homodimer.</text>
</comment>
<comment type="subcellular location">
    <subcellularLocation>
        <location evidence="1">Cytoplasm</location>
    </subcellularLocation>
</comment>
<comment type="similarity">
    <text evidence="1">Belongs to the aerobic coproporphyrinogen-III oxidase family.</text>
</comment>
<protein>
    <recommendedName>
        <fullName evidence="1">Oxygen-dependent coproporphyrinogen-III oxidase</fullName>
        <shortName evidence="1">CPO</shortName>
        <shortName evidence="1">Coprogen oxidase</shortName>
        <shortName evidence="1">Coproporphyrinogenase</shortName>
        <ecNumber evidence="1">1.3.3.3</ecNumber>
    </recommendedName>
</protein>
<organism>
    <name type="scientific">Yersinia pseudotuberculosis serotype O:1b (strain IP 31758)</name>
    <dbReference type="NCBI Taxonomy" id="349747"/>
    <lineage>
        <taxon>Bacteria</taxon>
        <taxon>Pseudomonadati</taxon>
        <taxon>Pseudomonadota</taxon>
        <taxon>Gammaproteobacteria</taxon>
        <taxon>Enterobacterales</taxon>
        <taxon>Yersiniaceae</taxon>
        <taxon>Yersinia</taxon>
    </lineage>
</organism>
<reference key="1">
    <citation type="journal article" date="2007" name="PLoS Genet.">
        <title>The complete genome sequence of Yersinia pseudotuberculosis IP31758, the causative agent of Far East scarlet-like fever.</title>
        <authorList>
            <person name="Eppinger M."/>
            <person name="Rosovitz M.J."/>
            <person name="Fricke W.F."/>
            <person name="Rasko D.A."/>
            <person name="Kokorina G."/>
            <person name="Fayolle C."/>
            <person name="Lindler L.E."/>
            <person name="Carniel E."/>
            <person name="Ravel J."/>
        </authorList>
    </citation>
    <scope>NUCLEOTIDE SEQUENCE [LARGE SCALE GENOMIC DNA]</scope>
    <source>
        <strain>IP 31758</strain>
    </source>
</reference>
<feature type="chain" id="PRO_1000059709" description="Oxygen-dependent coproporphyrinogen-III oxidase">
    <location>
        <begin position="1"/>
        <end position="309"/>
    </location>
</feature>
<feature type="region of interest" description="Important for dimerization" evidence="1">
    <location>
        <begin position="242"/>
        <end position="277"/>
    </location>
</feature>
<feature type="active site" description="Proton donor" evidence="1">
    <location>
        <position position="108"/>
    </location>
</feature>
<feature type="binding site" evidence="1">
    <location>
        <position position="94"/>
    </location>
    <ligand>
        <name>substrate</name>
    </ligand>
</feature>
<feature type="binding site" evidence="1">
    <location>
        <position position="98"/>
    </location>
    <ligand>
        <name>a divalent metal cation</name>
        <dbReference type="ChEBI" id="CHEBI:60240"/>
    </ligand>
</feature>
<feature type="binding site" evidence="1">
    <location>
        <position position="108"/>
    </location>
    <ligand>
        <name>a divalent metal cation</name>
        <dbReference type="ChEBI" id="CHEBI:60240"/>
    </ligand>
</feature>
<feature type="binding site" evidence="1">
    <location>
        <begin position="110"/>
        <end position="112"/>
    </location>
    <ligand>
        <name>substrate</name>
    </ligand>
</feature>
<feature type="binding site" evidence="1">
    <location>
        <position position="147"/>
    </location>
    <ligand>
        <name>a divalent metal cation</name>
        <dbReference type="ChEBI" id="CHEBI:60240"/>
    </ligand>
</feature>
<feature type="binding site" evidence="1">
    <location>
        <position position="177"/>
    </location>
    <ligand>
        <name>a divalent metal cation</name>
        <dbReference type="ChEBI" id="CHEBI:60240"/>
    </ligand>
</feature>
<feature type="binding site" evidence="1">
    <location>
        <begin position="260"/>
        <end position="262"/>
    </location>
    <ligand>
        <name>substrate</name>
    </ligand>
</feature>
<feature type="site" description="Important for dimerization" evidence="1">
    <location>
        <position position="177"/>
    </location>
</feature>
<name>HEM6_YERP3</name>
<gene>
    <name evidence="1" type="primary">hemF</name>
    <name type="ordered locus">YpsIP31758_1280</name>
</gene>
<dbReference type="EC" id="1.3.3.3" evidence="1"/>
<dbReference type="EMBL" id="CP000720">
    <property type="protein sequence ID" value="ABS48535.1"/>
    <property type="molecule type" value="Genomic_DNA"/>
</dbReference>
<dbReference type="RefSeq" id="WP_012104841.1">
    <property type="nucleotide sequence ID" value="NC_009708.1"/>
</dbReference>
<dbReference type="SMR" id="A7FG82"/>
<dbReference type="KEGG" id="ypi:YpsIP31758_1280"/>
<dbReference type="HOGENOM" id="CLU_026169_0_1_6"/>
<dbReference type="UniPathway" id="UPA00251">
    <property type="reaction ID" value="UER00322"/>
</dbReference>
<dbReference type="Proteomes" id="UP000002412">
    <property type="component" value="Chromosome"/>
</dbReference>
<dbReference type="GO" id="GO:0005737">
    <property type="term" value="C:cytoplasm"/>
    <property type="evidence" value="ECO:0007669"/>
    <property type="project" value="UniProtKB-SubCell"/>
</dbReference>
<dbReference type="GO" id="GO:0004109">
    <property type="term" value="F:coproporphyrinogen oxidase activity"/>
    <property type="evidence" value="ECO:0007669"/>
    <property type="project" value="UniProtKB-UniRule"/>
</dbReference>
<dbReference type="GO" id="GO:0046872">
    <property type="term" value="F:metal ion binding"/>
    <property type="evidence" value="ECO:0007669"/>
    <property type="project" value="UniProtKB-KW"/>
</dbReference>
<dbReference type="GO" id="GO:0042803">
    <property type="term" value="F:protein homodimerization activity"/>
    <property type="evidence" value="ECO:0000250"/>
    <property type="project" value="UniProtKB"/>
</dbReference>
<dbReference type="GO" id="GO:0006782">
    <property type="term" value="P:protoporphyrinogen IX biosynthetic process"/>
    <property type="evidence" value="ECO:0007669"/>
    <property type="project" value="UniProtKB-UniRule"/>
</dbReference>
<dbReference type="FunFam" id="3.40.1500.10:FF:000001">
    <property type="entry name" value="Oxygen-dependent coproporphyrinogen-III oxidase"/>
    <property type="match status" value="1"/>
</dbReference>
<dbReference type="Gene3D" id="3.40.1500.10">
    <property type="entry name" value="Coproporphyrinogen III oxidase, aerobic"/>
    <property type="match status" value="1"/>
</dbReference>
<dbReference type="HAMAP" id="MF_00333">
    <property type="entry name" value="Coprogen_oxidas"/>
    <property type="match status" value="1"/>
</dbReference>
<dbReference type="InterPro" id="IPR001260">
    <property type="entry name" value="Coprogen_oxidase_aer"/>
</dbReference>
<dbReference type="InterPro" id="IPR036406">
    <property type="entry name" value="Coprogen_oxidase_aer_sf"/>
</dbReference>
<dbReference type="InterPro" id="IPR018375">
    <property type="entry name" value="Coprogen_oxidase_CS"/>
</dbReference>
<dbReference type="NCBIfam" id="NF003727">
    <property type="entry name" value="PRK05330.1"/>
    <property type="match status" value="1"/>
</dbReference>
<dbReference type="PANTHER" id="PTHR10755">
    <property type="entry name" value="COPROPORPHYRINOGEN III OXIDASE, MITOCHONDRIAL"/>
    <property type="match status" value="1"/>
</dbReference>
<dbReference type="PANTHER" id="PTHR10755:SF0">
    <property type="entry name" value="OXYGEN-DEPENDENT COPROPORPHYRINOGEN-III OXIDASE, MITOCHONDRIAL"/>
    <property type="match status" value="1"/>
</dbReference>
<dbReference type="Pfam" id="PF01218">
    <property type="entry name" value="Coprogen_oxidas"/>
    <property type="match status" value="1"/>
</dbReference>
<dbReference type="PIRSF" id="PIRSF000166">
    <property type="entry name" value="Coproporphyri_ox"/>
    <property type="match status" value="1"/>
</dbReference>
<dbReference type="PRINTS" id="PR00073">
    <property type="entry name" value="COPRGNOXDASE"/>
</dbReference>
<dbReference type="SUPFAM" id="SSF102886">
    <property type="entry name" value="Coproporphyrinogen III oxidase"/>
    <property type="match status" value="1"/>
</dbReference>
<dbReference type="PROSITE" id="PS01021">
    <property type="entry name" value="COPROGEN_OXIDASE"/>
    <property type="match status" value="1"/>
</dbReference>
<accession>A7FG82</accession>
<sequence length="309" mass="34990">MNSPDIALIKTYLLTLQDNICGALAQADGHAEFTEECWVREEGGGGRSRVLVNGAVFEQAGVNFSHVSGAMLPASATAHRPELAGRSFQALGVSLVIHPLNPYLPTSHANVRFFIAEKPGEDAVWWFGGGFDLTPYYGFEEDAIHWHQVAHSLCQPFGEQIYPRYKKWCDDYFYIKHRQEARGIGGLFFDDLNSPDFMTCFNFTQAVGDGFLAAYMPIVARRKALGWGDRERQFQLYRRGRYVEFNLVWDRGTLFGLQTGGRTESILMSLPPLVRWEYNYQPEADSAEAALYRDFLPVKDWLAIKGETH</sequence>